<sequence length="602" mass="66859">MQHDLPGGRHDEADSSETGGAGTTENPSSEQARQIRFLEEEVALLRRKLTDSPRQNRVLEQRLAEANERVSQLTERNNKLVETLREARSQLLALREEVDRLAQPPSGYGVFIAAYDDNTVDVFTSGRKMRVAVSPTVDIQSLRRGQSVRLNEALTVVEVGGFESTGEVCTLREVLAPDTEGGSARALVAGHTDEERVVWLADPLAEQTLKPGDSLLVDPKAGYAYERVPKAEVEDLVLEEVPDVRYEDIGGLYRQIEQIRDAVELPFLHADLYTQYKLRPPKGVLLYGPPGCGKTLIAKAVANSLAKQVAAATGEKDAKSYFLNIKGPELLNKFVGETERHIRMIFQRAREKASDGTPVIVFFDEMESIFRTRGSGVSSDVETTIVPQLLSEIDGVEGLENVIVIGASNREDMIDPAILRPGRLDVKIKIERPDAEGAKDIFSKYLTPDLPIHADDLAEFGGDRQATIDAMIQHTVERMYEESEENRFLEVTYANGDKEVLYFRDFNSGAMIQNIVDRAKKAAIKSVLETNQPGLRVQHLLDAIVDEFAENEDLPNTTNPDDWARISGKKGERIVYIRTLVTGKNQESGRVIDTATNTGQYL</sequence>
<dbReference type="EMBL" id="CP001683">
    <property type="protein sequence ID" value="ACU97216.1"/>
    <property type="molecule type" value="Genomic_DNA"/>
</dbReference>
<dbReference type="RefSeq" id="WP_015786529.1">
    <property type="nucleotide sequence ID" value="NC_013159.1"/>
</dbReference>
<dbReference type="SMR" id="C7MWW2"/>
<dbReference type="STRING" id="471857.Svir_22080"/>
<dbReference type="KEGG" id="svi:Svir_22080"/>
<dbReference type="eggNOG" id="COG1222">
    <property type="taxonomic scope" value="Bacteria"/>
</dbReference>
<dbReference type="HOGENOM" id="CLU_036054_0_0_11"/>
<dbReference type="UniPathway" id="UPA00997"/>
<dbReference type="Proteomes" id="UP000000841">
    <property type="component" value="Chromosome"/>
</dbReference>
<dbReference type="GO" id="GO:0000502">
    <property type="term" value="C:proteasome complex"/>
    <property type="evidence" value="ECO:0007669"/>
    <property type="project" value="UniProtKB-KW"/>
</dbReference>
<dbReference type="GO" id="GO:0005524">
    <property type="term" value="F:ATP binding"/>
    <property type="evidence" value="ECO:0007669"/>
    <property type="project" value="UniProtKB-UniRule"/>
</dbReference>
<dbReference type="GO" id="GO:0016887">
    <property type="term" value="F:ATP hydrolysis activity"/>
    <property type="evidence" value="ECO:0007669"/>
    <property type="project" value="UniProtKB-UniRule"/>
</dbReference>
<dbReference type="GO" id="GO:0019941">
    <property type="term" value="P:modification-dependent protein catabolic process"/>
    <property type="evidence" value="ECO:0007669"/>
    <property type="project" value="InterPro"/>
</dbReference>
<dbReference type="GO" id="GO:0010498">
    <property type="term" value="P:proteasomal protein catabolic process"/>
    <property type="evidence" value="ECO:0007669"/>
    <property type="project" value="InterPro"/>
</dbReference>
<dbReference type="FunFam" id="3.40.50.300:FF:000155">
    <property type="entry name" value="AAA ATPase forming ring-shaped complexes"/>
    <property type="match status" value="1"/>
</dbReference>
<dbReference type="Gene3D" id="1.10.8.60">
    <property type="match status" value="1"/>
</dbReference>
<dbReference type="Gene3D" id="1.20.5.170">
    <property type="match status" value="1"/>
</dbReference>
<dbReference type="Gene3D" id="2.40.50.140">
    <property type="entry name" value="Nucleic acid-binding proteins"/>
    <property type="match status" value="2"/>
</dbReference>
<dbReference type="Gene3D" id="3.40.50.300">
    <property type="entry name" value="P-loop containing nucleotide triphosphate hydrolases"/>
    <property type="match status" value="1"/>
</dbReference>
<dbReference type="HAMAP" id="MF_02112">
    <property type="entry name" value="ARC_ATPase"/>
    <property type="match status" value="1"/>
</dbReference>
<dbReference type="InterPro" id="IPR003593">
    <property type="entry name" value="AAA+_ATPase"/>
</dbReference>
<dbReference type="InterPro" id="IPR050168">
    <property type="entry name" value="AAA_ATPase_domain"/>
</dbReference>
<dbReference type="InterPro" id="IPR003959">
    <property type="entry name" value="ATPase_AAA_core"/>
</dbReference>
<dbReference type="InterPro" id="IPR003960">
    <property type="entry name" value="ATPase_AAA_CS"/>
</dbReference>
<dbReference type="InterPro" id="IPR012340">
    <property type="entry name" value="NA-bd_OB-fold"/>
</dbReference>
<dbReference type="InterPro" id="IPR027417">
    <property type="entry name" value="P-loop_NTPase"/>
</dbReference>
<dbReference type="InterPro" id="IPR032501">
    <property type="entry name" value="Prot_ATP_ID_OB_2nd"/>
</dbReference>
<dbReference type="InterPro" id="IPR041626">
    <property type="entry name" value="Prot_ATP_ID_OB_N"/>
</dbReference>
<dbReference type="InterPro" id="IPR022482">
    <property type="entry name" value="Proteasome_ATPase"/>
</dbReference>
<dbReference type="NCBIfam" id="TIGR03689">
    <property type="entry name" value="pup_AAA"/>
    <property type="match status" value="1"/>
</dbReference>
<dbReference type="PANTHER" id="PTHR23077">
    <property type="entry name" value="AAA-FAMILY ATPASE"/>
    <property type="match status" value="1"/>
</dbReference>
<dbReference type="PANTHER" id="PTHR23077:SF144">
    <property type="entry name" value="PROTEASOME-ASSOCIATED ATPASE"/>
    <property type="match status" value="1"/>
</dbReference>
<dbReference type="Pfam" id="PF00004">
    <property type="entry name" value="AAA"/>
    <property type="match status" value="1"/>
</dbReference>
<dbReference type="Pfam" id="PF16450">
    <property type="entry name" value="Prot_ATP_ID_OB_C"/>
    <property type="match status" value="1"/>
</dbReference>
<dbReference type="Pfam" id="PF17758">
    <property type="entry name" value="Prot_ATP_ID_OB_N"/>
    <property type="match status" value="1"/>
</dbReference>
<dbReference type="SMART" id="SM00382">
    <property type="entry name" value="AAA"/>
    <property type="match status" value="1"/>
</dbReference>
<dbReference type="SUPFAM" id="SSF52540">
    <property type="entry name" value="P-loop containing nucleoside triphosphate hydrolases"/>
    <property type="match status" value="1"/>
</dbReference>
<dbReference type="PROSITE" id="PS00674">
    <property type="entry name" value="AAA"/>
    <property type="match status" value="1"/>
</dbReference>
<comment type="function">
    <text evidence="1">ATPase which is responsible for recognizing, binding, unfolding and translocation of pupylated proteins into the bacterial 20S proteasome core particle. May be essential for opening the gate of the 20S proteasome via an interaction with its C-terminus, thereby allowing substrate entry and access to the site of proteolysis. Thus, the C-termini of the proteasomal ATPase may function like a 'key in a lock' to induce gate opening and therefore regulate proteolysis.</text>
</comment>
<comment type="pathway">
    <text evidence="1">Protein degradation; proteasomal Pup-dependent pathway.</text>
</comment>
<comment type="subunit">
    <text evidence="1">Homohexamer. Assembles into a hexameric ring structure that caps the 20S proteasome core. Strongly interacts with the prokaryotic ubiquitin-like protein Pup through a hydrophobic interface; the interacting region of ARC lies in its N-terminal coiled-coil domain. There is one Pup binding site per ARC hexamer ring. Upon ATP-binding, the C-terminus of ARC interacts with the alpha-rings of the proteasome core, possibly by binding to the intersubunit pockets.</text>
</comment>
<comment type="domain">
    <text evidence="1">Consists of three main regions, an N-terminal coiled-coil domain that binds to protein Pup and functions as a docking station, an interdomain involved in ARC hexamerization, and a C-terminal ATPase domain of the AAA type.</text>
</comment>
<comment type="similarity">
    <text evidence="1">Belongs to the AAA ATPase family.</text>
</comment>
<gene>
    <name evidence="1" type="primary">arc</name>
    <name type="ordered locus">Svir_22080</name>
</gene>
<name>ARC_SACVD</name>
<proteinExistence type="inferred from homology"/>
<evidence type="ECO:0000255" key="1">
    <source>
        <dbReference type="HAMAP-Rule" id="MF_02112"/>
    </source>
</evidence>
<evidence type="ECO:0000256" key="2">
    <source>
        <dbReference type="SAM" id="MobiDB-lite"/>
    </source>
</evidence>
<protein>
    <recommendedName>
        <fullName evidence="1">Proteasome-associated ATPase</fullName>
    </recommendedName>
    <alternativeName>
        <fullName evidence="1">AAA ATPase forming ring-shaped complexes</fullName>
        <shortName evidence="1">ARC</shortName>
    </alternativeName>
    <alternativeName>
        <fullName evidence="1">Proteasomal ATPase</fullName>
    </alternativeName>
</protein>
<accession>C7MWW2</accession>
<keyword id="KW-0067">ATP-binding</keyword>
<keyword id="KW-0143">Chaperone</keyword>
<keyword id="KW-0175">Coiled coil</keyword>
<keyword id="KW-0547">Nucleotide-binding</keyword>
<keyword id="KW-0647">Proteasome</keyword>
<keyword id="KW-1185">Reference proteome</keyword>
<reference key="1">
    <citation type="journal article" date="2009" name="Stand. Genomic Sci.">
        <title>Complete genome sequence of Saccharomonospora viridis type strain (P101).</title>
        <authorList>
            <person name="Pati A."/>
            <person name="Sikorski J."/>
            <person name="Nolan M."/>
            <person name="Lapidus A."/>
            <person name="Copeland A."/>
            <person name="Glavina Del Rio T."/>
            <person name="Lucas S."/>
            <person name="Chen F."/>
            <person name="Tice H."/>
            <person name="Pitluck S."/>
            <person name="Cheng J.F."/>
            <person name="Chertkov O."/>
            <person name="Brettin T."/>
            <person name="Han C."/>
            <person name="Detter J.C."/>
            <person name="Kuske C."/>
            <person name="Bruce D."/>
            <person name="Goodwin L."/>
            <person name="Chain P."/>
            <person name="D'haeseleer P."/>
            <person name="Chen A."/>
            <person name="Palaniappan K."/>
            <person name="Ivanova N."/>
            <person name="Mavromatis K."/>
            <person name="Mikhailova N."/>
            <person name="Rohde M."/>
            <person name="Tindall B.J."/>
            <person name="Goker M."/>
            <person name="Bristow J."/>
            <person name="Eisen J.A."/>
            <person name="Markowitz V."/>
            <person name="Hugenholtz P."/>
            <person name="Kyrpides N.C."/>
            <person name="Klenk H.P."/>
        </authorList>
    </citation>
    <scope>NUCLEOTIDE SEQUENCE [LARGE SCALE GENOMIC DNA]</scope>
    <source>
        <strain>ATCC 15386 / DSM 43017 / JCM 3036 / CCUG 5913 / NBRC 12207 / NCIMB 9602 / P101</strain>
    </source>
</reference>
<organism>
    <name type="scientific">Saccharomonospora viridis (strain ATCC 15386 / DSM 43017 / JCM 3036 / CCUG 5913 / NBRC 12207 / NCIMB 9602 / P101)</name>
    <name type="common">Thermoactinomyces viridis</name>
    <dbReference type="NCBI Taxonomy" id="471857"/>
    <lineage>
        <taxon>Bacteria</taxon>
        <taxon>Bacillati</taxon>
        <taxon>Actinomycetota</taxon>
        <taxon>Actinomycetes</taxon>
        <taxon>Pseudonocardiales</taxon>
        <taxon>Pseudonocardiaceae</taxon>
        <taxon>Saccharomonospora</taxon>
    </lineage>
</organism>
<feature type="chain" id="PRO_0000397016" description="Proteasome-associated ATPase">
    <location>
        <begin position="1"/>
        <end position="602"/>
    </location>
</feature>
<feature type="region of interest" description="Disordered" evidence="2">
    <location>
        <begin position="1"/>
        <end position="33"/>
    </location>
</feature>
<feature type="region of interest" description="Docks into pockets in the proteasome alpha-ring" evidence="1">
    <location>
        <begin position="601"/>
        <end position="602"/>
    </location>
</feature>
<feature type="coiled-coil region" evidence="1">
    <location>
        <begin position="28"/>
        <end position="103"/>
    </location>
</feature>
<feature type="compositionally biased region" description="Basic and acidic residues" evidence="2">
    <location>
        <begin position="1"/>
        <end position="13"/>
    </location>
</feature>
<feature type="compositionally biased region" description="Polar residues" evidence="2">
    <location>
        <begin position="23"/>
        <end position="32"/>
    </location>
</feature>
<feature type="binding site" evidence="1">
    <location>
        <begin position="291"/>
        <end position="296"/>
    </location>
    <ligand>
        <name>ATP</name>
        <dbReference type="ChEBI" id="CHEBI:30616"/>
    </ligand>
</feature>